<keyword id="KW-0025">Alternative splicing</keyword>
<keyword id="KW-0053">Apoptosis</keyword>
<keyword id="KW-1003">Cell membrane</keyword>
<keyword id="KW-0968">Cytoplasmic vesicle</keyword>
<keyword id="KW-1015">Disulfide bond</keyword>
<keyword id="KW-0245">EGF-like domain</keyword>
<keyword id="KW-0325">Glycoprotein</keyword>
<keyword id="KW-0472">Membrane</keyword>
<keyword id="KW-0597">Phosphoprotein</keyword>
<keyword id="KW-1185">Reference proteome</keyword>
<keyword id="KW-0677">Repeat</keyword>
<keyword id="KW-0732">Signal</keyword>
<keyword id="KW-0812">Transmembrane</keyword>
<keyword id="KW-1133">Transmembrane helix</keyword>
<keyword id="KW-0832">Ubl conjugation</keyword>
<feature type="signal peptide" evidence="1">
    <location>
        <begin position="1"/>
        <end position="18"/>
    </location>
</feature>
<feature type="chain" id="PRO_0000379932" description="Cell death abnormality protein 1" evidence="1">
    <location>
        <begin position="19"/>
        <end position="1111"/>
    </location>
</feature>
<feature type="topological domain" description="Extracellular" evidence="1">
    <location>
        <begin position="19"/>
        <end position="910"/>
    </location>
</feature>
<feature type="transmembrane region" description="Helical" evidence="1">
    <location>
        <begin position="911"/>
        <end position="931"/>
    </location>
</feature>
<feature type="topological domain" description="Cytoplasmic" evidence="1">
    <location>
        <begin position="932"/>
        <end position="1111"/>
    </location>
</feature>
<feature type="domain" description="EMI" evidence="3">
    <location>
        <begin position="41"/>
        <end position="113"/>
    </location>
</feature>
<feature type="domain" description="EGF-like 1" evidence="2">
    <location>
        <begin position="118"/>
        <end position="148"/>
    </location>
</feature>
<feature type="domain" description="EGF-like 2" evidence="2">
    <location>
        <begin position="156"/>
        <end position="191"/>
    </location>
</feature>
<feature type="domain" description="EGF-like 3" evidence="2">
    <location>
        <begin position="199"/>
        <end position="233"/>
    </location>
</feature>
<feature type="domain" description="EGF-like 4" evidence="2">
    <location>
        <begin position="241"/>
        <end position="276"/>
    </location>
</feature>
<feature type="domain" description="EGF-like 5" evidence="2">
    <location>
        <begin position="421"/>
        <end position="458"/>
    </location>
</feature>
<feature type="repeat" description="FU" evidence="1">
    <location>
        <begin position="629"/>
        <end position="680"/>
    </location>
</feature>
<feature type="domain" description="EGF-like 6" evidence="2">
    <location>
        <begin position="681"/>
        <end position="716"/>
    </location>
</feature>
<feature type="region of interest" description="Interaction with trim-21" evidence="17">
    <location>
        <begin position="931"/>
        <end position="1007"/>
    </location>
</feature>
<feature type="region of interest" description="Disordered" evidence="4">
    <location>
        <begin position="940"/>
        <end position="993"/>
    </location>
</feature>
<feature type="region of interest" description="Disordered" evidence="4">
    <location>
        <begin position="1006"/>
        <end position="1111"/>
    </location>
</feature>
<feature type="short sequence motif" description="NPXY" evidence="1">
    <location>
        <begin position="962"/>
        <end position="965"/>
    </location>
</feature>
<feature type="short sequence motif" description="YXXL" evidence="1">
    <location>
        <begin position="1019"/>
        <end position="1022"/>
    </location>
</feature>
<feature type="compositionally biased region" description="Polar residues" evidence="4">
    <location>
        <begin position="963"/>
        <end position="980"/>
    </location>
</feature>
<feature type="compositionally biased region" description="Low complexity" evidence="4">
    <location>
        <begin position="1030"/>
        <end position="1039"/>
    </location>
</feature>
<feature type="compositionally biased region" description="Polar residues" evidence="4">
    <location>
        <begin position="1068"/>
        <end position="1083"/>
    </location>
</feature>
<feature type="modified residue" description="Phosphotyrosine; by SRC" evidence="5 17">
    <location>
        <position position="1019"/>
    </location>
</feature>
<feature type="glycosylation site" description="N-linked (GlcNAc...) asparagine" evidence="11">
    <location>
        <position position="66"/>
    </location>
</feature>
<feature type="glycosylation site" description="N-linked (GlcNAc...) asparagine" evidence="7 11">
    <location>
        <position position="333"/>
    </location>
</feature>
<feature type="glycosylation site" description="N-linked (GlcNAc...) asparagine" evidence="1">
    <location>
        <position position="345"/>
    </location>
</feature>
<feature type="glycosylation site" description="N-linked (GlcNAc...) asparagine" evidence="1">
    <location>
        <position position="456"/>
    </location>
</feature>
<feature type="disulfide bond" evidence="1">
    <location>
        <begin position="45"/>
        <end position="106"/>
    </location>
</feature>
<feature type="disulfide bond" evidence="1">
    <location>
        <begin position="71"/>
        <end position="80"/>
    </location>
</feature>
<feature type="disulfide bond" evidence="1">
    <location>
        <begin position="105"/>
        <end position="117"/>
    </location>
</feature>
<feature type="disulfide bond" evidence="1">
    <location>
        <begin position="121"/>
        <end position="130"/>
    </location>
</feature>
<feature type="disulfide bond" evidence="1">
    <location>
        <begin position="125"/>
        <end position="136"/>
    </location>
</feature>
<feature type="disulfide bond" evidence="1">
    <location>
        <begin position="138"/>
        <end position="147"/>
    </location>
</feature>
<feature type="disulfide bond" evidence="1">
    <location>
        <begin position="160"/>
        <end position="172"/>
    </location>
</feature>
<feature type="disulfide bond" evidence="1">
    <location>
        <begin position="166"/>
        <end position="179"/>
    </location>
</feature>
<feature type="disulfide bond" evidence="1">
    <location>
        <begin position="181"/>
        <end position="190"/>
    </location>
</feature>
<feature type="disulfide bond" evidence="1">
    <location>
        <begin position="203"/>
        <end position="215"/>
    </location>
</feature>
<feature type="disulfide bond" evidence="1">
    <location>
        <begin position="209"/>
        <end position="221"/>
    </location>
</feature>
<feature type="disulfide bond" evidence="1">
    <location>
        <begin position="223"/>
        <end position="232"/>
    </location>
</feature>
<feature type="disulfide bond" evidence="1">
    <location>
        <begin position="245"/>
        <end position="257"/>
    </location>
</feature>
<feature type="disulfide bond" evidence="1">
    <location>
        <begin position="251"/>
        <end position="264"/>
    </location>
</feature>
<feature type="disulfide bond" evidence="1">
    <location>
        <begin position="266"/>
        <end position="275"/>
    </location>
</feature>
<feature type="disulfide bond" evidence="1">
    <location>
        <begin position="425"/>
        <end position="439"/>
    </location>
</feature>
<feature type="disulfide bond" evidence="1">
    <location>
        <begin position="431"/>
        <end position="446"/>
    </location>
</feature>
<feature type="disulfide bond" evidence="1">
    <location>
        <begin position="448"/>
        <end position="457"/>
    </location>
</feature>
<feature type="disulfide bond" evidence="1">
    <location>
        <begin position="685"/>
        <end position="697"/>
    </location>
</feature>
<feature type="disulfide bond" evidence="1">
    <location>
        <begin position="691"/>
        <end position="704"/>
    </location>
</feature>
<feature type="disulfide bond" evidence="1">
    <location>
        <begin position="706"/>
        <end position="715"/>
    </location>
</feature>
<feature type="splice variant" id="VSP_053133" description="In isoform d." evidence="20">
    <original>MRLILLVLLATWQVVVDTRAPTFPDKLTQQLQQQGTTEPQGDHVCTVKT</original>
    <variation>MCVPRDIGSRVKTHTPTSHHRTPSPRTLRTKNVLRTICTPKFEFSYIFF</variation>
    <location>
        <begin position="1"/>
        <end position="49"/>
    </location>
</feature>
<feature type="splice variant" id="VSP_053134" description="In isoform d." evidence="20">
    <location>
        <begin position="50"/>
        <end position="1111"/>
    </location>
</feature>
<feature type="splice variant" id="VSP_053135" description="In isoform c." evidence="20">
    <location>
        <begin position="1017"/>
        <end position="1082"/>
    </location>
</feature>
<feature type="splice variant" id="VSP_053136" description="In isoform b." evidence="20">
    <location>
        <begin position="1042"/>
        <end position="1082"/>
    </location>
</feature>
<feature type="splice variant" id="VSP_053137" description="In isoform c." evidence="20">
    <original>E</original>
    <variation>K</variation>
    <location>
        <position position="1083"/>
    </location>
</feature>
<feature type="mutagenesis site" description="In n1995; increase in corpses in L1 head." evidence="5">
    <original>P</original>
    <variation>L</variation>
    <location>
        <position position="124"/>
    </location>
</feature>
<feature type="mutagenesis site" description="In n2091; increase in corpses in L1 head." evidence="5">
    <original>C</original>
    <variation>Y</variation>
    <location>
        <position position="136"/>
    </location>
</feature>
<feature type="mutagenesis site" description="In n2089; increase in corpses in L1 head." evidence="5">
    <original>C</original>
    <variation>Y</variation>
    <location>
        <position position="330"/>
    </location>
</feature>
<feature type="mutagenesis site" description="In e1735; defective clearance of apoptotic cell corpses in embryos." evidence="8">
    <location>
        <begin position="375"/>
        <end position="1111"/>
    </location>
</feature>
<feature type="mutagenesis site" description="In e1797, n2000, and n2092; increase in corpses in L1 head." evidence="5">
    <original>C</original>
    <variation>Y</variation>
    <location>
        <position position="448"/>
    </location>
</feature>
<feature type="mutagenesis site" description="In n1951; increase in corpses in L1 head." evidence="5">
    <original>C</original>
    <variation>Y</variation>
    <location>
        <position position="501"/>
    </location>
</feature>
<feature type="mutagenesis site" description="In e1801; increase in corpses in L1 head." evidence="5">
    <original>C</original>
    <variation>Y</variation>
    <location>
        <position position="803"/>
    </location>
</feature>
<feature type="mutagenesis site" description="85% loss of activity. Does not attenuate engulfment defects seen in ced-1(e1735) mutants. Severely impaired interaction with ced-6. Increased protein levels, reduced polyubiquitination and reduced degradation rate." evidence="5 17">
    <original>N</original>
    <variation>A</variation>
    <location>
        <position position="962"/>
    </location>
</feature>
<feature type="mutagenesis site" description="71% loss of activity." evidence="5">
    <original>Y</original>
    <variation>A</variation>
    <location>
        <position position="965"/>
    </location>
</feature>
<feature type="mutagenesis site" description="Does not attenuate engulfment defects seen in ced-1(e1735) mutants. Does not affect binding to ced-6. Reduced polyubiquitination and reduced degradation rate." evidence="17">
    <original>Y</original>
    <variation>F</variation>
    <location>
        <position position="965"/>
    </location>
</feature>
<feature type="mutagenesis site" description="54% loss of activity. Does not rescue engulfment defects seen in ced-1(e1735) mutants. Reduced phosphorylation by src-1. Reduced interaction with nck-1. Does not affect binding to ced-6 or trim-21." evidence="5 17">
    <original>Y</original>
    <variation>A</variation>
    <location>
        <position position="1019"/>
    </location>
</feature>
<dbReference type="EMBL" id="AF332568">
    <property type="protein sequence ID" value="AAG60061.1"/>
    <property type="molecule type" value="mRNA"/>
</dbReference>
<dbReference type="EMBL" id="BX284601">
    <property type="protein sequence ID" value="CAA21739.1"/>
    <property type="molecule type" value="Genomic_DNA"/>
</dbReference>
<dbReference type="EMBL" id="BX284601">
    <property type="protein sequence ID" value="CAD27614.1"/>
    <property type="molecule type" value="Genomic_DNA"/>
</dbReference>
<dbReference type="EMBL" id="BX284601">
    <property type="protein sequence ID" value="CAD27615.1"/>
    <property type="molecule type" value="Genomic_DNA"/>
</dbReference>
<dbReference type="EMBL" id="BX284601">
    <property type="protein sequence ID" value="CAL44979.1"/>
    <property type="molecule type" value="Genomic_DNA"/>
</dbReference>
<dbReference type="PIR" id="T26972">
    <property type="entry name" value="T26972"/>
</dbReference>
<dbReference type="RefSeq" id="NP_001021772.1">
    <molecule id="Q9XWD6-2"/>
    <property type="nucleotide sequence ID" value="NM_001026601.7"/>
</dbReference>
<dbReference type="RefSeq" id="NP_001021773.1">
    <property type="nucleotide sequence ID" value="NM_001026602.3"/>
</dbReference>
<dbReference type="RefSeq" id="NP_001076621.1">
    <molecule id="Q9XWD6-4"/>
    <property type="nucleotide sequence ID" value="NM_001083152.5"/>
</dbReference>
<dbReference type="RefSeq" id="NP_001370132.1">
    <molecule id="Q9XWD6-3"/>
    <property type="nucleotide sequence ID" value="NM_001383734.2"/>
</dbReference>
<dbReference type="RefSeq" id="NP_740922.1">
    <molecule id="Q9XWD6-1"/>
    <property type="nucleotide sequence ID" value="NM_170927.5"/>
</dbReference>
<dbReference type="SMR" id="Q9XWD6"/>
<dbReference type="BioGRID" id="38467">
    <property type="interactions" value="6"/>
</dbReference>
<dbReference type="ELM" id="Q9XWD6"/>
<dbReference type="FunCoup" id="Q9XWD6">
    <property type="interactions" value="119"/>
</dbReference>
<dbReference type="IntAct" id="Q9XWD6">
    <property type="interactions" value="1"/>
</dbReference>
<dbReference type="MINT" id="Q9XWD6"/>
<dbReference type="STRING" id="6239.Y47H9C.4a.1"/>
<dbReference type="GlyCosmos" id="Q9XWD6">
    <property type="glycosylation" value="4 sites, No reported glycans"/>
</dbReference>
<dbReference type="iPTMnet" id="Q9XWD6"/>
<dbReference type="PaxDb" id="6239-Y47H9C.4a"/>
<dbReference type="PeptideAtlas" id="Q9XWD6"/>
<dbReference type="EnsemblMetazoa" id="Y47H9C.4a.1">
    <molecule id="Q9XWD6-1"/>
    <property type="protein sequence ID" value="Y47H9C.4a.1"/>
    <property type="gene ID" value="WBGene00000415"/>
</dbReference>
<dbReference type="EnsemblMetazoa" id="Y47H9C.4b.1">
    <molecule id="Q9XWD6-2"/>
    <property type="protein sequence ID" value="Y47H9C.4b.1"/>
    <property type="gene ID" value="WBGene00000415"/>
</dbReference>
<dbReference type="EnsemblMetazoa" id="Y47H9C.4c.1">
    <molecule id="Q9XWD6-3"/>
    <property type="protein sequence ID" value="Y47H9C.4c.1"/>
    <property type="gene ID" value="WBGene00000415"/>
</dbReference>
<dbReference type="EnsemblMetazoa" id="Y47H9C.4d.1">
    <molecule id="Q9XWD6-4"/>
    <property type="protein sequence ID" value="Y47H9C.4d.1"/>
    <property type="gene ID" value="WBGene00000415"/>
</dbReference>
<dbReference type="GeneID" id="173064"/>
<dbReference type="KEGG" id="cel:CELE_Y47H9C.4"/>
<dbReference type="UCSC" id="Y47H9C.4a">
    <property type="organism name" value="c. elegans"/>
</dbReference>
<dbReference type="AGR" id="WB:WBGene00000415"/>
<dbReference type="CTD" id="173064"/>
<dbReference type="WormBase" id="Y47H9C.4a">
    <molecule id="Q9XWD6-1"/>
    <property type="protein sequence ID" value="CE20264"/>
    <property type="gene ID" value="WBGene00000415"/>
    <property type="gene designation" value="ced-1"/>
</dbReference>
<dbReference type="WormBase" id="Y47H9C.4b">
    <molecule id="Q9XWD6-2"/>
    <property type="protein sequence ID" value="CE30361"/>
    <property type="gene ID" value="WBGene00000415"/>
    <property type="gene designation" value="ced-1"/>
</dbReference>
<dbReference type="WormBase" id="Y47H9C.4c">
    <molecule id="Q9XWD6-3"/>
    <property type="protein sequence ID" value="CE30362"/>
    <property type="gene ID" value="WBGene00000415"/>
    <property type="gene designation" value="ced-1"/>
</dbReference>
<dbReference type="WormBase" id="Y47H9C.4d">
    <molecule id="Q9XWD6-4"/>
    <property type="protein sequence ID" value="CE40433"/>
    <property type="gene ID" value="WBGene00000415"/>
    <property type="gene designation" value="ced-1"/>
</dbReference>
<dbReference type="eggNOG" id="KOG1218">
    <property type="taxonomic scope" value="Eukaryota"/>
</dbReference>
<dbReference type="GeneTree" id="ENSGT00940000167451"/>
<dbReference type="InParanoid" id="Q9XWD6"/>
<dbReference type="OMA" id="ECKCASD"/>
<dbReference type="OrthoDB" id="18487at2759"/>
<dbReference type="PhylomeDB" id="Q9XWD6"/>
<dbReference type="PRO" id="PR:Q9XWD6"/>
<dbReference type="Proteomes" id="UP000001940">
    <property type="component" value="Chromosome I"/>
</dbReference>
<dbReference type="Bgee" id="WBGene00000415">
    <property type="expression patterns" value="Expressed in pharyngeal muscle cell (C elegans) and 4 other cell types or tissues"/>
</dbReference>
<dbReference type="GO" id="GO:0009986">
    <property type="term" value="C:cell surface"/>
    <property type="evidence" value="ECO:0000314"/>
    <property type="project" value="UniProtKB"/>
</dbReference>
<dbReference type="GO" id="GO:0001891">
    <property type="term" value="C:phagocytic cup"/>
    <property type="evidence" value="ECO:0000314"/>
    <property type="project" value="WormBase"/>
</dbReference>
<dbReference type="GO" id="GO:0030670">
    <property type="term" value="C:phagocytic vesicle membrane"/>
    <property type="evidence" value="ECO:0000314"/>
    <property type="project" value="WormBase"/>
</dbReference>
<dbReference type="GO" id="GO:0005886">
    <property type="term" value="C:plasma membrane"/>
    <property type="evidence" value="ECO:0000314"/>
    <property type="project" value="WormBase"/>
</dbReference>
<dbReference type="GO" id="GO:0031260">
    <property type="term" value="C:pseudopodium membrane"/>
    <property type="evidence" value="ECO:0000314"/>
    <property type="project" value="WormBase"/>
</dbReference>
<dbReference type="GO" id="GO:0005044">
    <property type="term" value="F:scavenger receptor activity"/>
    <property type="evidence" value="ECO:0000353"/>
    <property type="project" value="WormBase"/>
</dbReference>
<dbReference type="GO" id="GO:0030036">
    <property type="term" value="P:actin cytoskeleton organization"/>
    <property type="evidence" value="ECO:0000314"/>
    <property type="project" value="UniProtKB"/>
</dbReference>
<dbReference type="GO" id="GO:1902742">
    <property type="term" value="P:apoptotic process involved in development"/>
    <property type="evidence" value="ECO:0000315"/>
    <property type="project" value="UniProtKB"/>
</dbReference>
<dbReference type="GO" id="GO:0034620">
    <property type="term" value="P:cellular response to unfolded protein"/>
    <property type="evidence" value="ECO:0000314"/>
    <property type="project" value="UniProtKB"/>
</dbReference>
<dbReference type="GO" id="GO:0042742">
    <property type="term" value="P:defense response to bacterium"/>
    <property type="evidence" value="ECO:0000315"/>
    <property type="project" value="UniProtKB"/>
</dbReference>
<dbReference type="GO" id="GO:0043652">
    <property type="term" value="P:engulfment of apoptotic cell"/>
    <property type="evidence" value="ECO:0000314"/>
    <property type="project" value="UniProtKB"/>
</dbReference>
<dbReference type="GO" id="GO:0000132">
    <property type="term" value="P:establishment of mitotic spindle orientation"/>
    <property type="evidence" value="ECO:0000316"/>
    <property type="project" value="UniProtKB"/>
</dbReference>
<dbReference type="GO" id="GO:0045184">
    <property type="term" value="P:establishment of protein localization"/>
    <property type="evidence" value="ECO:0000314"/>
    <property type="project" value="UniProtKB"/>
</dbReference>
<dbReference type="GO" id="GO:0070986">
    <property type="term" value="P:left/right axis specification"/>
    <property type="evidence" value="ECO:0000316"/>
    <property type="project" value="UniProtKB"/>
</dbReference>
<dbReference type="GO" id="GO:0001845">
    <property type="term" value="P:phagolysosome assembly"/>
    <property type="evidence" value="ECO:0000315"/>
    <property type="project" value="UniProtKB"/>
</dbReference>
<dbReference type="GO" id="GO:1904747">
    <property type="term" value="P:positive regulation of apoptotic process involved in development"/>
    <property type="evidence" value="ECO:0000315"/>
    <property type="project" value="UniProtKB"/>
</dbReference>
<dbReference type="GO" id="GO:1903356">
    <property type="term" value="P:positive regulation of distal tip cell migration"/>
    <property type="evidence" value="ECO:0000315"/>
    <property type="project" value="UniProtKB"/>
</dbReference>
<dbReference type="GO" id="GO:1901076">
    <property type="term" value="P:positive regulation of engulfment of apoptotic cell"/>
    <property type="evidence" value="ECO:0000315"/>
    <property type="project" value="UniProtKB"/>
</dbReference>
<dbReference type="GO" id="GO:0012501">
    <property type="term" value="P:programmed cell death"/>
    <property type="evidence" value="ECO:0000315"/>
    <property type="project" value="UniProtKB"/>
</dbReference>
<dbReference type="GO" id="GO:0043654">
    <property type="term" value="P:recognition of apoptotic cell"/>
    <property type="evidence" value="ECO:0000314"/>
    <property type="project" value="WormBase"/>
</dbReference>
<dbReference type="FunFam" id="2.170.300.10:FF:000027">
    <property type="entry name" value="Multiple epidermal growth factor-like domains 6"/>
    <property type="match status" value="2"/>
</dbReference>
<dbReference type="FunFam" id="2.170.300.10:FF:000042">
    <property type="entry name" value="Platelet endothelial aggregation receptor 1"/>
    <property type="match status" value="1"/>
</dbReference>
<dbReference type="FunFam" id="2.170.300.10:FF:000077">
    <property type="entry name" value="Platelet endothelial aggregation receptor 1"/>
    <property type="match status" value="1"/>
</dbReference>
<dbReference type="Gene3D" id="2.10.25.10">
    <property type="entry name" value="Laminin"/>
    <property type="match status" value="1"/>
</dbReference>
<dbReference type="Gene3D" id="2.170.300.10">
    <property type="entry name" value="Tie2 ligand-binding domain superfamily"/>
    <property type="match status" value="5"/>
</dbReference>
<dbReference type="InterPro" id="IPR000742">
    <property type="entry name" value="EGF-like_dom"/>
</dbReference>
<dbReference type="InterPro" id="IPR011489">
    <property type="entry name" value="EMI_domain"/>
</dbReference>
<dbReference type="InterPro" id="IPR006212">
    <property type="entry name" value="Furin_repeat"/>
</dbReference>
<dbReference type="InterPro" id="IPR002049">
    <property type="entry name" value="LE_dom"/>
</dbReference>
<dbReference type="InterPro" id="IPR042635">
    <property type="entry name" value="MEGF10/SREC1/2-like"/>
</dbReference>
<dbReference type="PANTHER" id="PTHR24043:SF8">
    <property type="entry name" value="EGF-LIKE DOMAIN-CONTAINING PROTEIN"/>
    <property type="match status" value="1"/>
</dbReference>
<dbReference type="PANTHER" id="PTHR24043">
    <property type="entry name" value="SCAVENGER RECEPTOR CLASS F"/>
    <property type="match status" value="1"/>
</dbReference>
<dbReference type="Pfam" id="PF00053">
    <property type="entry name" value="EGF_laminin"/>
    <property type="match status" value="5"/>
</dbReference>
<dbReference type="PRINTS" id="PR00011">
    <property type="entry name" value="EGFLAMININ"/>
</dbReference>
<dbReference type="SMART" id="SM00181">
    <property type="entry name" value="EGF"/>
    <property type="match status" value="17"/>
</dbReference>
<dbReference type="SMART" id="SM00180">
    <property type="entry name" value="EGF_Lam"/>
    <property type="match status" value="16"/>
</dbReference>
<dbReference type="SMART" id="SM00261">
    <property type="entry name" value="FU"/>
    <property type="match status" value="5"/>
</dbReference>
<dbReference type="PROSITE" id="PS00022">
    <property type="entry name" value="EGF_1"/>
    <property type="match status" value="15"/>
</dbReference>
<dbReference type="PROSITE" id="PS01186">
    <property type="entry name" value="EGF_2"/>
    <property type="match status" value="11"/>
</dbReference>
<dbReference type="PROSITE" id="PS50026">
    <property type="entry name" value="EGF_3"/>
    <property type="match status" value="6"/>
</dbReference>
<dbReference type="PROSITE" id="PS51041">
    <property type="entry name" value="EMI"/>
    <property type="match status" value="1"/>
</dbReference>
<name>CED1_CAEEL</name>
<gene>
    <name evidence="19 23" type="primary">ced-1</name>
    <name evidence="23" type="ORF">Y47H9C.4</name>
</gene>
<protein>
    <recommendedName>
        <fullName evidence="19">Cell death abnormality protein 1</fullName>
    </recommendedName>
</protein>
<sequence>MRLILLVLLATWQVVVDTRAPTFPDKLTQQLQQQGTTEPQGDHVCTVKTIVDDYELKKVIHTVVYNDTEQCLNPLTGFQCTVEKRGQKASYQRQLVKKEKYVKQCCDGYYQTKDHFCLPDCNPPCKKGKCIEPGKCECDPGYGGKYCASSCSVGTWGLGCSKSCDCENGANCDPELGTCICTSGFQGERCEKPCPDNKWGPNCVKSCPCQNGGKCNKEGKCVCSDGWGGEFCLNKCEEGKFGAECKFECNCQNGATCDNTNGKCICKSGYHGALCENECSVGFFGSGCTQKCDCLNNQNCDSSSGECKCIGWTGKHCDIGCSRGRFGLQCKQNCTCPGLEFSDSNASCDAKTGQCQCESGYKGPKCDERKCDAEQYGADCSKTCTCVRENTLMCAPNTGFCRCKPGFYGDNCELACSKDSYGPNCEKQAMCDWNHASECNPETGSCVCKPGRTGKNCSEPCPLDFYGPNCAHQCQCNQRGVGCDGADGKCQCDRGWTGHRCEHHCPADTFGANCEKRCKCPKGIGCDPITGECTCPAGLQGANCDIGCPEGSYGPGCKLHCKCVNGKCDKETGECTCQPGFFGSDCSTTCSKGKYGESCELSCPCSDASCSKQTGKCLCPLGTKGVSCDQKCDPNTFGFLCQETVTPSPCASTDPKNGVCLSCPPGSSGIHCEHNCPAGSYGDGCQQVCSCADGHGCDPTTGECICEPGYHGKTCSEKCPDGKYGYGCALDCPKCASGSTCDHINGLCICPAGLEGALCTRPCSAGFWGNGCRQVCRCTSEYKQCNAQTGECSCPAGFQGDRCDKPCEDGYYGPDCIKKCKCQGTATSSCNRVSGACHCHPGFTGEFCHALCPESTFGLKCSKECPKDGCGDGYECDAAIGCCHVDQMSCGKAKQEFEALNGAGRSTGLTWFFVLLIVALCGGLGLIALFYRNKYQKEKDPDMPTVSFHKAPNNDEGREFQNPLYSRQSVFPDSDAFSSENNGNHQGGPPNGLLTLEEEELENKKIHGRSAAGRGNNDYASLDEVAGEGSSSSASASASRRGLNSSEQSRRPLLEEHDEEEFDEPHENSISPAHAVTTSNHNENPYADISSPDPVTQNSANKKRAQDNLYT</sequence>
<proteinExistence type="evidence at protein level"/>
<accession>Q9XWD6</accession>
<accession>Q0E7J9</accession>
<accession>Q8T3A6</accession>
<accession>Q8T3A7</accession>
<comment type="function">
    <text evidence="5 8 9 10 12 13 14 15 16 18">Involved in programmed cell death, also called apoptosis, in both somatic and germ cells (PubMed:11163239, PubMed:12944970, PubMed:15744306, PubMed:16740477, PubMed:18351800, PubMed:1936965, PubMed:26598553, PubMed:27650246, PubMed:6857247). Acts by recruiting ced-6 to phagosomes which enables actin-dependent cytoskeletal reorganization and subsequent engulfment of the apoptotic cell corpse (PubMed:15744306). Has a role in the association of ppk-3 and rab-7 with the phagosomal surface which is necessary for the incorporation of lysosomes to phagosomes during phagosome maturation (PubMed:16740477, PubMed:18351800). Activates the expression of unfolded protein response genes, which are involved in the immune response to live bacteria (PubMed:18606143).</text>
</comment>
<comment type="subunit">
    <text evidence="6 17">Interacts (via C-terminus) with ced-6 (via PTB domain) (PubMed:11729193, PubMed:35929733). Interacts with nck-1; the interaction is required for ced-1 degradation through the proteasome pathway (PubMed:35929733). Interacts with V-ATPase vha-10 (PubMed:35929733).</text>
</comment>
<comment type="subcellular location">
    <subcellularLocation>
        <location evidence="5 17">Cell membrane</location>
        <topology evidence="5">Single-pass type I membrane protein</topology>
    </subcellularLocation>
    <subcellularLocation>
        <location evidence="5 17">Cytoplasmic vesicle</location>
        <location evidence="5 17">Phagosome membrane</location>
        <topology evidence="5">Single-pass type I membrane protein</topology>
    </subcellularLocation>
    <text evidence="1 5">Colocalizes with ced-6 and actin halos around early apoptotic cells. Temporally colocalizes with dyn-1 during engulfment of cell corpses.</text>
</comment>
<comment type="alternative products">
    <event type="alternative splicing"/>
    <isoform>
        <id>Q9XWD6-1</id>
        <name evidence="23">a</name>
        <sequence type="displayed"/>
    </isoform>
    <isoform>
        <id>Q9XWD6-2</id>
        <name evidence="24">b</name>
        <sequence type="described" ref="VSP_053136"/>
    </isoform>
    <isoform>
        <id>Q9XWD6-3</id>
        <name evidence="25">c</name>
        <sequence type="described" ref="VSP_053135 VSP_053137"/>
    </isoform>
    <isoform>
        <id>Q9XWD6-4</id>
        <name evidence="26">d</name>
        <sequence type="described" ref="VSP_053133 VSP_053134"/>
    </isoform>
</comment>
<comment type="tissue specificity">
    <text evidence="5">Expressed in engulfing cells and syncytium hypodermal cells. Ced-7 is necessary for clustering around cell corpses prior to engulfment.</text>
</comment>
<comment type="domain">
    <text evidence="5">NPXY motif thought to be involved in signal transduction that activates the cell corpse internalization process.</text>
</comment>
<comment type="PTM">
    <text evidence="5 17">Phosphorylation of Tyr-1019, within the YXXL motif, by src-1 is thought to initiate phagosomal formation.</text>
</comment>
<comment type="PTM">
    <text evidence="17">'Lys-48'-linked polyubiquitination by trim-21 leads to proteasomal degradation.</text>
</comment>
<comment type="disruption phenotype">
    <text evidence="10 12 13 14 15 16 18">Accumulation of cell corpses (PubMed:26598553). Appears immunocompromised resulting in susceptibility to bacterial infection (PubMed:18606143, PubMed:1936965, PubMed:6857247). Reduced or lack of association of ppk-3 and rab-7 with the phagosomal surface (PubMed:18351800). Defective in the recruitment of lysosomes to phagosomes (PubMed:16740477). Double knockout with the P-granule component pgl-1 results in an increased number of cell corpses in the gonad as compared to the ced-1 single mutant (PubMed:26598553). Conversely, double knockout with pgl-1 or pgl-3 results in reduced somatic cell apoptosis (PubMed:27650246). Double knockout with the synthetic multivulva class B protein hpl-2 results in reduced somatic cell apoptosis at 25 degrees Celsius (PubMed:27650246). Triple knockout with hpl-2 and pgl-1 partially recovers the reduced somatic cell apoptotic cell defect in the ced-1 and hpl-2 double knockout (PubMed:27650246). Triple knockout with hpl-2 and pgl-1 and knockdown with either ced-3 or ced-4 reduces the somatic cell apoptosis defect in the ced-1, hpl-2 and pgl-1 triple knockout (PubMed:27650246). Double knockout with hpl-2 and knockdown with either pgl-1, pgl-3, glh-1 or glh-4 RNAi rescues the reduced somatic cell apoptotic cell defect in the ced-1 and hpl-2 double knockout (PubMed:27650246). Knockout with RNAi-mediated knockdown of synthetic multivulva class B proteins lin-9, lin-35, lin-37 or lin-54 results in reduced somatic cell apoptosis (PubMed:27650246).</text>
</comment>
<evidence type="ECO:0000255" key="1"/>
<evidence type="ECO:0000255" key="2">
    <source>
        <dbReference type="PROSITE-ProRule" id="PRU00076"/>
    </source>
</evidence>
<evidence type="ECO:0000255" key="3">
    <source>
        <dbReference type="PROSITE-ProRule" id="PRU00384"/>
    </source>
</evidence>
<evidence type="ECO:0000256" key="4">
    <source>
        <dbReference type="SAM" id="MobiDB-lite"/>
    </source>
</evidence>
<evidence type="ECO:0000269" key="5">
    <source>
    </source>
</evidence>
<evidence type="ECO:0000269" key="6">
    <source>
    </source>
</evidence>
<evidence type="ECO:0000269" key="7">
    <source>
    </source>
</evidence>
<evidence type="ECO:0000269" key="8">
    <source>
    </source>
</evidence>
<evidence type="ECO:0000269" key="9">
    <source>
    </source>
</evidence>
<evidence type="ECO:0000269" key="10">
    <source>
    </source>
</evidence>
<evidence type="ECO:0000269" key="11">
    <source>
    </source>
</evidence>
<evidence type="ECO:0000269" key="12">
    <source>
    </source>
</evidence>
<evidence type="ECO:0000269" key="13">
    <source>
    </source>
</evidence>
<evidence type="ECO:0000269" key="14">
    <source>
    </source>
</evidence>
<evidence type="ECO:0000269" key="15">
    <source>
    </source>
</evidence>
<evidence type="ECO:0000269" key="16">
    <source>
    </source>
</evidence>
<evidence type="ECO:0000269" key="17">
    <source>
    </source>
</evidence>
<evidence type="ECO:0000269" key="18">
    <source>
    </source>
</evidence>
<evidence type="ECO:0000303" key="19">
    <source>
    </source>
</evidence>
<evidence type="ECO:0000305" key="20"/>
<evidence type="ECO:0000312" key="21">
    <source>
        <dbReference type="EMBL" id="AAG60061.1"/>
    </source>
</evidence>
<evidence type="ECO:0000312" key="22">
    <source>
        <dbReference type="EMBL" id="CAA21739.1"/>
    </source>
</evidence>
<evidence type="ECO:0000312" key="23">
    <source>
        <dbReference type="WormBase" id="Y47H9C.4a"/>
    </source>
</evidence>
<evidence type="ECO:0000312" key="24">
    <source>
        <dbReference type="WormBase" id="Y47H9C.4b"/>
    </source>
</evidence>
<evidence type="ECO:0000312" key="25">
    <source>
        <dbReference type="WormBase" id="Y47H9C.4c"/>
    </source>
</evidence>
<evidence type="ECO:0000312" key="26">
    <source>
        <dbReference type="WormBase" id="Y47H9C.4d"/>
    </source>
</evidence>
<organism>
    <name type="scientific">Caenorhabditis elegans</name>
    <dbReference type="NCBI Taxonomy" id="6239"/>
    <lineage>
        <taxon>Eukaryota</taxon>
        <taxon>Metazoa</taxon>
        <taxon>Ecdysozoa</taxon>
        <taxon>Nematoda</taxon>
        <taxon>Chromadorea</taxon>
        <taxon>Rhabditida</taxon>
        <taxon>Rhabditina</taxon>
        <taxon>Rhabditomorpha</taxon>
        <taxon>Rhabditoidea</taxon>
        <taxon>Rhabditidae</taxon>
        <taxon>Peloderinae</taxon>
        <taxon>Caenorhabditis</taxon>
    </lineage>
</organism>
<reference evidence="20 21" key="1">
    <citation type="journal article" date="2001" name="Cell">
        <title>CED-1 is a transmembrane receptor that mediates cell corpse engulfment in C. elegans.</title>
        <authorList>
            <person name="Zhou Z."/>
            <person name="Hartwieg E."/>
            <person name="Horvitz H.R."/>
        </authorList>
    </citation>
    <scope>NUCLEOTIDE SEQUENCE [MRNA] (ISOFORM A)</scope>
    <scope>FUNCTION</scope>
    <scope>SUBCELLULAR LOCATION</scope>
    <scope>TISSUE SPECIFICITY</scope>
    <scope>IDENTIFICATION OF NPXY AND YXXL MOTIFS</scope>
    <scope>PHOSPHORYLATION AT TYR-1019</scope>
    <scope>MUTAGENESIS OF PRO-124; CYS-136; CYS-330; CYS-448; CYS-501; CYS-803; ASN-962; TYR-965 AND TYR-1019</scope>
    <source>
        <tissue evidence="5">Embryo</tissue>
    </source>
</reference>
<reference evidence="20 22" key="2">
    <citation type="journal article" date="1998" name="Science">
        <title>Genome sequence of the nematode C. elegans: a platform for investigating biology.</title>
        <authorList>
            <consortium name="The C. elegans sequencing consortium"/>
        </authorList>
    </citation>
    <scope>NUCLEOTIDE SEQUENCE [LARGE SCALE GENOMIC DNA]</scope>
    <source>
        <strain>Bristol N2</strain>
    </source>
</reference>
<reference evidence="20" key="3">
    <citation type="journal article" date="1983" name="Science">
        <title>Mutations affecting programmed cell deaths in the nematode Caenorhabditis elegans.</title>
        <authorList>
            <person name="Hedgecock E.M."/>
            <person name="Sulston J.E."/>
            <person name="Thomson J.N."/>
        </authorList>
    </citation>
    <scope>FUNCTION</scope>
    <scope>DISRUPTION PHENOTYPE</scope>
</reference>
<reference evidence="20" key="4">
    <citation type="journal article" date="1991" name="Genetics">
        <title>Genes required for the engulfment of cell corpses during programmed cell death in Caenorhabditis elegans.</title>
        <authorList>
            <person name="Ellis R.E."/>
            <person name="Jacobson D.M."/>
            <person name="Horvitz H.R."/>
        </authorList>
    </citation>
    <scope>FUNCTION</scope>
    <scope>DISRUPTION PHENOTYPE</scope>
</reference>
<reference evidence="20" key="5">
    <citation type="journal article" date="2002" name="J. Biol. Chem.">
        <title>Interaction of CED-6/GULP, an adapter protein involved in engulfment of apoptotic cells with CED-1 and CD91/low density lipoprotein receptor-related protein (LRP).</title>
        <authorList>
            <person name="Su H.P."/>
            <person name="Nakada-Tsukui K."/>
            <person name="Tosello-Trampont A.-C."/>
            <person name="Li Y."/>
            <person name="Bu G."/>
            <person name="Henson P.M."/>
            <person name="Ravichandran K.S."/>
        </authorList>
    </citation>
    <scope>INTERACTION WITH CED-6</scope>
</reference>
<reference key="6">
    <citation type="journal article" date="2003" name="Nature">
        <title>Suppression of CED-3-independent apoptosis by mitochondrial betaNAC in Caenorhabditis elegans.</title>
        <authorList>
            <person name="Bloss T.A."/>
            <person name="Witze E.S."/>
            <person name="Rothman J.H."/>
        </authorList>
    </citation>
    <scope>FUNCTION</scope>
    <scope>MUTAGENESIS OF 375-GLN--THR-1111</scope>
</reference>
<reference evidence="20" key="7">
    <citation type="journal article" date="2003" name="Nat. Biotechnol.">
        <title>Lectin affinity capture, isotope-coded tagging and mass spectrometry to identify N-linked glycoproteins.</title>
        <authorList>
            <person name="Kaji H."/>
            <person name="Saito H."/>
            <person name="Yamauchi Y."/>
            <person name="Shinkawa T."/>
            <person name="Taoka M."/>
            <person name="Hirabayashi J."/>
            <person name="Kasai K."/>
            <person name="Takahashi N."/>
            <person name="Isobe T."/>
        </authorList>
    </citation>
    <scope>GLYCOSYLATION [LARGE SCALE ANALYSIS] AT ASN-333</scope>
    <scope>IDENTIFICATION BY MASS SPECTROMETRY</scope>
    <source>
        <strain>Bristol N2</strain>
    </source>
</reference>
<reference evidence="20" key="8">
    <citation type="journal article" date="2005" name="Nature">
        <title>Two pathways converge at CED-10 to mediate actin rearrangement and corpse removal in C. elegans.</title>
        <authorList>
            <person name="Kinchen J.M."/>
            <person name="Cabello J."/>
            <person name="Klingele D."/>
            <person name="Wong K."/>
            <person name="Feichtinger R."/>
            <person name="Schnabel H."/>
            <person name="Schnabel R."/>
            <person name="Hengartner M.O."/>
        </authorList>
    </citation>
    <scope>FUNCTION</scope>
</reference>
<reference evidence="20" key="9">
    <citation type="journal article" date="2006" name="Dev. Cell">
        <title>C. elegans Dynamin mediates the signaling of phagocytic receptor CED-1 for the engulfment and degradation of apoptotic cells.</title>
        <authorList>
            <person name="Yu X."/>
            <person name="Odera S."/>
            <person name="Chuang C.H."/>
            <person name="Lu N."/>
            <person name="Zhou Z."/>
        </authorList>
    </citation>
    <scope>FUNCTION</scope>
    <scope>DISRUPTION PHENOTYPE</scope>
</reference>
<reference evidence="20" key="10">
    <citation type="journal article" date="2007" name="Mol. Cell. Proteomics">
        <title>Proteomics reveals N-linked glycoprotein diversity in Caenorhabditis elegans and suggests an atypical translocation mechanism for integral membrane proteins.</title>
        <authorList>
            <person name="Kaji H."/>
            <person name="Kamiie J."/>
            <person name="Kawakami H."/>
            <person name="Kido K."/>
            <person name="Yamauchi Y."/>
            <person name="Shinkawa T."/>
            <person name="Taoka M."/>
            <person name="Takahashi N."/>
            <person name="Isobe T."/>
        </authorList>
    </citation>
    <scope>GLYCOSYLATION [LARGE SCALE ANALYSIS] AT ASN-66 AND ASN-333</scope>
    <scope>IDENTIFICATION BY MASS SPECTROMETRY</scope>
    <source>
        <strain>Bristol N2</strain>
    </source>
</reference>
<reference evidence="20" key="11">
    <citation type="journal article" date="2008" name="Dev. Cell">
        <title>Unfolded protein response genes regulated by CED-1 are required for Caenorhabditis elegans innate immunity.</title>
        <authorList>
            <person name="Haskins K.A."/>
            <person name="Russell J.F."/>
            <person name="Gaddis N."/>
            <person name="Dressman H.K."/>
            <person name="Aballay A."/>
        </authorList>
    </citation>
    <scope>FUNCTION</scope>
    <scope>DISRUPTION PHENOTYPE</scope>
</reference>
<reference evidence="20" key="12">
    <citation type="journal article" date="2008" name="PLoS Biol.">
        <title>Phagocytic receptor CED-1 initiates a signaling pathway for degrading engulfed apoptotic cells.</title>
        <authorList>
            <person name="Yu X."/>
            <person name="Lu N."/>
            <person name="Zhou Z."/>
        </authorList>
    </citation>
    <scope>FUNCTION</scope>
    <scope>DISRUPTION PHENOTYPE</scope>
</reference>
<reference key="13">
    <citation type="journal article" date="2016" name="J. Cell Sci.">
        <title>Loss of PGL-1 and PGL-3, members of a family of constitutive germ-granule components, promotes germline apoptosis in C. elegans.</title>
        <authorList>
            <person name="Min H."/>
            <person name="Shim Y.H."/>
            <person name="Kawasaki I."/>
        </authorList>
    </citation>
    <scope>FUNCTION</scope>
    <scope>DISRUPTION PHENOTYPE</scope>
</reference>
<reference key="14">
    <citation type="journal article" date="2016" name="Sci. Rep.">
        <title>Somatically expressed germ-granule components, PGL-1 and PGL-3, repress programmed cell death in C. elegans.</title>
        <authorList>
            <person name="Al-Amin M."/>
            <person name="Min H."/>
            <person name="Shim Y.H."/>
            <person name="Kawasaki I."/>
        </authorList>
    </citation>
    <scope>FUNCTION</scope>
    <scope>DISRUPTION PHENOTYPE</scope>
</reference>
<reference key="15">
    <citation type="journal article" date="2022" name="Elife">
        <title>trim-21 promotes proteasomal degradation of CED-1 for apoptotic cell clearance in C. elegans.</title>
        <authorList>
            <person name="Yuan L."/>
            <person name="Li P."/>
            <person name="Jing H."/>
            <person name="Zheng Q."/>
            <person name="Xiao H."/>
        </authorList>
    </citation>
    <scope>INTERACTION WITH CED-6; NCK-1 AND VHA-10</scope>
    <scope>SUBCELLULAR LOCATION</scope>
    <scope>UBIQUITINATION</scope>
    <scope>PHOSPHORYLATION AT TYR-1019</scope>
    <scope>MUTAGENESIS OF ASN-962; TYR-965 AND TYR-1019</scope>
</reference>